<reference key="1">
    <citation type="journal article" date="2007" name="Am. Fern J.">
        <title>The complete plastid genome sequence of Angiopteris evecta (G. Forst.) Hoffm. (Marattiaceae).</title>
        <authorList>
            <person name="Roper J.M."/>
            <person name="Hansen S.K."/>
            <person name="Wolf P.G."/>
            <person name="Karol K.G."/>
            <person name="Mandoli D.F."/>
            <person name="Everett K.D.E."/>
            <person name="Kuehl J.V."/>
            <person name="Boore J.L."/>
        </authorList>
    </citation>
    <scope>NUCLEOTIDE SEQUENCE [LARGE SCALE GENOMIC DNA]</scope>
</reference>
<evidence type="ECO:0000255" key="1">
    <source>
        <dbReference type="HAMAP-Rule" id="MF_00293"/>
    </source>
</evidence>
<sequence length="43" mass="4841">METATLVAIFISCLLVSFTGYALYTAFGQPSKELRDPFEEHED</sequence>
<accession>A2T361</accession>
<feature type="chain" id="PRO_0000362175" description="Protein PsbN">
    <location>
        <begin position="1"/>
        <end position="43"/>
    </location>
</feature>
<feature type="transmembrane region" description="Helical" evidence="1">
    <location>
        <begin position="7"/>
        <end position="27"/>
    </location>
</feature>
<geneLocation type="chloroplast"/>
<organism>
    <name type="scientific">Angiopteris evecta</name>
    <name type="common">Mule's foot fern</name>
    <name type="synonym">Polypodium evectum</name>
    <dbReference type="NCBI Taxonomy" id="13825"/>
    <lineage>
        <taxon>Eukaryota</taxon>
        <taxon>Viridiplantae</taxon>
        <taxon>Streptophyta</taxon>
        <taxon>Embryophyta</taxon>
        <taxon>Tracheophyta</taxon>
        <taxon>Polypodiopsida</taxon>
        <taxon>Marattiidae</taxon>
        <taxon>Marattiales</taxon>
        <taxon>Marattiaceae</taxon>
        <taxon>Angiopteris</taxon>
    </lineage>
</organism>
<name>PSBN_ANGEV</name>
<protein>
    <recommendedName>
        <fullName evidence="1">Protein PsbN</fullName>
    </recommendedName>
</protein>
<proteinExistence type="inferred from homology"/>
<comment type="function">
    <text evidence="1">May play a role in photosystem I and II biogenesis.</text>
</comment>
<comment type="subcellular location">
    <subcellularLocation>
        <location evidence="1">Plastid</location>
        <location evidence="1">Chloroplast thylakoid membrane</location>
        <topology evidence="1">Single-pass membrane protein</topology>
    </subcellularLocation>
</comment>
<comment type="similarity">
    <text evidence="1">Belongs to the PsbN family.</text>
</comment>
<comment type="caution">
    <text evidence="1">Originally thought to be a component of PSII; based on experiments in Synechocystis, N.tabacum and barley, and its absence from PSII in T.elongatus and T.vulcanus, this is probably not true.</text>
</comment>
<keyword id="KW-0150">Chloroplast</keyword>
<keyword id="KW-0472">Membrane</keyword>
<keyword id="KW-0934">Plastid</keyword>
<keyword id="KW-0793">Thylakoid</keyword>
<keyword id="KW-0812">Transmembrane</keyword>
<keyword id="KW-1133">Transmembrane helix</keyword>
<gene>
    <name evidence="1" type="primary">psbN</name>
</gene>
<dbReference type="EMBL" id="DQ821119">
    <property type="protein sequence ID" value="ABG79628.1"/>
    <property type="molecule type" value="Genomic_DNA"/>
</dbReference>
<dbReference type="RefSeq" id="YP_001023729.1">
    <property type="nucleotide sequence ID" value="NC_008829.1"/>
</dbReference>
<dbReference type="SMR" id="A2T361"/>
<dbReference type="GeneID" id="4788178"/>
<dbReference type="GO" id="GO:0009535">
    <property type="term" value="C:chloroplast thylakoid membrane"/>
    <property type="evidence" value="ECO:0007669"/>
    <property type="project" value="UniProtKB-SubCell"/>
</dbReference>
<dbReference type="GO" id="GO:0015979">
    <property type="term" value="P:photosynthesis"/>
    <property type="evidence" value="ECO:0007669"/>
    <property type="project" value="InterPro"/>
</dbReference>
<dbReference type="HAMAP" id="MF_00293">
    <property type="entry name" value="PSII_PsbN"/>
    <property type="match status" value="1"/>
</dbReference>
<dbReference type="InterPro" id="IPR003398">
    <property type="entry name" value="PSII_PsbN"/>
</dbReference>
<dbReference type="PANTHER" id="PTHR35326">
    <property type="entry name" value="PROTEIN PSBN"/>
    <property type="match status" value="1"/>
</dbReference>
<dbReference type="PANTHER" id="PTHR35326:SF3">
    <property type="entry name" value="PROTEIN PSBN"/>
    <property type="match status" value="1"/>
</dbReference>
<dbReference type="Pfam" id="PF02468">
    <property type="entry name" value="PsbN"/>
    <property type="match status" value="1"/>
</dbReference>